<feature type="chain" id="PRO_1000002377" description="Cobyric acid synthase">
    <location>
        <begin position="1"/>
        <end position="506"/>
    </location>
</feature>
<feature type="domain" description="GATase cobBQ-type" evidence="1">
    <location>
        <begin position="251"/>
        <end position="448"/>
    </location>
</feature>
<feature type="active site" description="Nucleophile" evidence="1">
    <location>
        <position position="332"/>
    </location>
</feature>
<feature type="active site" evidence="1">
    <location>
        <position position="440"/>
    </location>
</feature>
<gene>
    <name evidence="1" type="primary">cobQ</name>
    <name type="ordered locus">SPA0852</name>
</gene>
<dbReference type="EMBL" id="CP000026">
    <property type="protein sequence ID" value="AAV76840.1"/>
    <property type="molecule type" value="Genomic_DNA"/>
</dbReference>
<dbReference type="RefSeq" id="WP_000189676.1">
    <property type="nucleotide sequence ID" value="NC_006511.1"/>
</dbReference>
<dbReference type="SMR" id="Q5PDU3"/>
<dbReference type="KEGG" id="spt:SPA0852"/>
<dbReference type="HOGENOM" id="CLU_019250_2_2_6"/>
<dbReference type="UniPathway" id="UPA00148"/>
<dbReference type="Proteomes" id="UP000008185">
    <property type="component" value="Chromosome"/>
</dbReference>
<dbReference type="GO" id="GO:0015420">
    <property type="term" value="F:ABC-type vitamin B12 transporter activity"/>
    <property type="evidence" value="ECO:0007669"/>
    <property type="project" value="UniProtKB-UniRule"/>
</dbReference>
<dbReference type="GO" id="GO:0003824">
    <property type="term" value="F:catalytic activity"/>
    <property type="evidence" value="ECO:0007669"/>
    <property type="project" value="InterPro"/>
</dbReference>
<dbReference type="GO" id="GO:0009236">
    <property type="term" value="P:cobalamin biosynthetic process"/>
    <property type="evidence" value="ECO:0007669"/>
    <property type="project" value="UniProtKB-UniRule"/>
</dbReference>
<dbReference type="CDD" id="cd05389">
    <property type="entry name" value="CobQ_N"/>
    <property type="match status" value="1"/>
</dbReference>
<dbReference type="CDD" id="cd01750">
    <property type="entry name" value="GATase1_CobQ"/>
    <property type="match status" value="1"/>
</dbReference>
<dbReference type="Gene3D" id="3.40.50.880">
    <property type="match status" value="1"/>
</dbReference>
<dbReference type="Gene3D" id="3.40.50.300">
    <property type="entry name" value="P-loop containing nucleotide triphosphate hydrolases"/>
    <property type="match status" value="1"/>
</dbReference>
<dbReference type="HAMAP" id="MF_00028">
    <property type="entry name" value="CobQ"/>
    <property type="match status" value="1"/>
</dbReference>
<dbReference type="InterPro" id="IPR029062">
    <property type="entry name" value="Class_I_gatase-like"/>
</dbReference>
<dbReference type="InterPro" id="IPR002586">
    <property type="entry name" value="CobQ/CobB/MinD/ParA_Nub-bd_dom"/>
</dbReference>
<dbReference type="InterPro" id="IPR033949">
    <property type="entry name" value="CobQ_GATase1"/>
</dbReference>
<dbReference type="InterPro" id="IPR047045">
    <property type="entry name" value="CobQ_N"/>
</dbReference>
<dbReference type="InterPro" id="IPR004459">
    <property type="entry name" value="CobQ_synth"/>
</dbReference>
<dbReference type="InterPro" id="IPR011698">
    <property type="entry name" value="GATase_3"/>
</dbReference>
<dbReference type="InterPro" id="IPR027417">
    <property type="entry name" value="P-loop_NTPase"/>
</dbReference>
<dbReference type="NCBIfam" id="TIGR00313">
    <property type="entry name" value="cobQ"/>
    <property type="match status" value="1"/>
</dbReference>
<dbReference type="NCBIfam" id="NF001989">
    <property type="entry name" value="PRK00784.1"/>
    <property type="match status" value="1"/>
</dbReference>
<dbReference type="PANTHER" id="PTHR21343:SF1">
    <property type="entry name" value="COBYRIC ACID SYNTHASE"/>
    <property type="match status" value="1"/>
</dbReference>
<dbReference type="PANTHER" id="PTHR21343">
    <property type="entry name" value="DETHIOBIOTIN SYNTHETASE"/>
    <property type="match status" value="1"/>
</dbReference>
<dbReference type="Pfam" id="PF01656">
    <property type="entry name" value="CbiA"/>
    <property type="match status" value="1"/>
</dbReference>
<dbReference type="Pfam" id="PF07685">
    <property type="entry name" value="GATase_3"/>
    <property type="match status" value="1"/>
</dbReference>
<dbReference type="SUPFAM" id="SSF52317">
    <property type="entry name" value="Class I glutamine amidotransferase-like"/>
    <property type="match status" value="1"/>
</dbReference>
<dbReference type="SUPFAM" id="SSF52540">
    <property type="entry name" value="P-loop containing nucleoside triphosphate hydrolases"/>
    <property type="match status" value="1"/>
</dbReference>
<dbReference type="PROSITE" id="PS51274">
    <property type="entry name" value="GATASE_COBBQ"/>
    <property type="match status" value="1"/>
</dbReference>
<organism>
    <name type="scientific">Salmonella paratyphi A (strain ATCC 9150 / SARB42)</name>
    <dbReference type="NCBI Taxonomy" id="295319"/>
    <lineage>
        <taxon>Bacteria</taxon>
        <taxon>Pseudomonadati</taxon>
        <taxon>Pseudomonadota</taxon>
        <taxon>Gammaproteobacteria</taxon>
        <taxon>Enterobacterales</taxon>
        <taxon>Enterobacteriaceae</taxon>
        <taxon>Salmonella</taxon>
    </lineage>
</organism>
<name>COBQ_SALPA</name>
<accession>Q5PDU3</accession>
<proteinExistence type="inferred from homology"/>
<reference key="1">
    <citation type="journal article" date="2004" name="Nat. Genet.">
        <title>Comparison of genome degradation in Paratyphi A and Typhi, human-restricted serovars of Salmonella enterica that cause typhoid.</title>
        <authorList>
            <person name="McClelland M."/>
            <person name="Sanderson K.E."/>
            <person name="Clifton S.W."/>
            <person name="Latreille P."/>
            <person name="Porwollik S."/>
            <person name="Sabo A."/>
            <person name="Meyer R."/>
            <person name="Bieri T."/>
            <person name="Ozersky P."/>
            <person name="McLellan M."/>
            <person name="Harkins C.R."/>
            <person name="Wang C."/>
            <person name="Nguyen C."/>
            <person name="Berghoff A."/>
            <person name="Elliott G."/>
            <person name="Kohlberg S."/>
            <person name="Strong C."/>
            <person name="Du F."/>
            <person name="Carter J."/>
            <person name="Kremizki C."/>
            <person name="Layman D."/>
            <person name="Leonard S."/>
            <person name="Sun H."/>
            <person name="Fulton L."/>
            <person name="Nash W."/>
            <person name="Miner T."/>
            <person name="Minx P."/>
            <person name="Delehaunty K."/>
            <person name="Fronick C."/>
            <person name="Magrini V."/>
            <person name="Nhan M."/>
            <person name="Warren W."/>
            <person name="Florea L."/>
            <person name="Spieth J."/>
            <person name="Wilson R.K."/>
        </authorList>
    </citation>
    <scope>NUCLEOTIDE SEQUENCE [LARGE SCALE GENOMIC DNA]</scope>
    <source>
        <strain>ATCC 9150 / SARB42</strain>
    </source>
</reference>
<protein>
    <recommendedName>
        <fullName evidence="1">Cobyric acid synthase</fullName>
    </recommendedName>
</protein>
<sequence>MTQAVMLQGTASDVGKSVLVAGLCRIFYQDGLRTAPFKSQNMALNSGITPDGKEMGRAQIFQAEAAGITPDVRMNPVLLKPTSDRQAQVVLMGKVATNMDAVSYHDYKPRLREQILAVYNSLAQEYDVIVLEGAGSPAEINLRDRDIVNMGMAEMAQCPVILVADIDRGGVFAAIYGTLALLHKQERDRVKGVIINKFRGDVALLYSGIEQIESLTGVPVLGVMPWLDVDLEDEDGVALQNDKYRGNAPRDITIAIVQLPHISNFTDFNALAAQPDVRIRYIRRPEALTDADLVILPGSKNTLSDLAWLRESGMADAVLQTHRQGVPVMGICGGYQMLGDTIVDEVESGLGTQPGLGLLNTITRFAQDKTTTQVNATMSGELPGWLAAAAGLPVRGYEIHMGETVLQEGCCTAMTLQKNGCSVADGAVTADGLAFGTYLHGLFDSDAFTRAVVNGLRARKGLAPWETTFCYAEHKARQFDLLAEAMRQHIDIDKIYTIMQQHQEPV</sequence>
<keyword id="KW-0169">Cobalamin biosynthesis</keyword>
<keyword id="KW-0315">Glutamine amidotransferase</keyword>
<evidence type="ECO:0000255" key="1">
    <source>
        <dbReference type="HAMAP-Rule" id="MF_00028"/>
    </source>
</evidence>
<comment type="function">
    <text evidence="1">Catalyzes amidations at positions B, D, E, and G on adenosylcobyrinic A,C-diamide. NH(2) groups are provided by glutamine, and one molecule of ATP is hydrogenolyzed for each amidation.</text>
</comment>
<comment type="pathway">
    <text evidence="1">Cofactor biosynthesis; adenosylcobalamin biosynthesis.</text>
</comment>
<comment type="similarity">
    <text evidence="1">Belongs to the CobB/CobQ family. CobQ subfamily.</text>
</comment>